<name>TRPD_RALPJ</name>
<protein>
    <recommendedName>
        <fullName evidence="1">Anthranilate phosphoribosyltransferase</fullName>
        <ecNumber evidence="1">2.4.2.18</ecNumber>
    </recommendedName>
</protein>
<proteinExistence type="inferred from homology"/>
<keyword id="KW-0028">Amino-acid biosynthesis</keyword>
<keyword id="KW-0057">Aromatic amino acid biosynthesis</keyword>
<keyword id="KW-0328">Glycosyltransferase</keyword>
<keyword id="KW-0460">Magnesium</keyword>
<keyword id="KW-0479">Metal-binding</keyword>
<keyword id="KW-0808">Transferase</keyword>
<keyword id="KW-0822">Tryptophan biosynthesis</keyword>
<comment type="function">
    <text evidence="1">Catalyzes the transfer of the phosphoribosyl group of 5-phosphorylribose-1-pyrophosphate (PRPP) to anthranilate to yield N-(5'-phosphoribosyl)-anthranilate (PRA).</text>
</comment>
<comment type="catalytic activity">
    <reaction evidence="1">
        <text>N-(5-phospho-beta-D-ribosyl)anthranilate + diphosphate = 5-phospho-alpha-D-ribose 1-diphosphate + anthranilate</text>
        <dbReference type="Rhea" id="RHEA:11768"/>
        <dbReference type="ChEBI" id="CHEBI:16567"/>
        <dbReference type="ChEBI" id="CHEBI:18277"/>
        <dbReference type="ChEBI" id="CHEBI:33019"/>
        <dbReference type="ChEBI" id="CHEBI:58017"/>
        <dbReference type="EC" id="2.4.2.18"/>
    </reaction>
</comment>
<comment type="cofactor">
    <cofactor evidence="1">
        <name>Mg(2+)</name>
        <dbReference type="ChEBI" id="CHEBI:18420"/>
    </cofactor>
    <text evidence="1">Binds 2 magnesium ions per monomer.</text>
</comment>
<comment type="pathway">
    <text evidence="1">Amino-acid biosynthesis; L-tryptophan biosynthesis; L-tryptophan from chorismate: step 2/5.</text>
</comment>
<comment type="subunit">
    <text evidence="1">Homodimer.</text>
</comment>
<comment type="similarity">
    <text evidence="1">Belongs to the anthranilate phosphoribosyltransferase family.</text>
</comment>
<sequence>MSITPQEALTRCIEHREIFHDEMLHLMRLIMRGEMSPVMAAALTMGLRVKKETIGEIAAAATVMREFATKVDVPAEVSDHFVDIVGTGGDGANTFNISTASMFVAAAAGARIAKHGGRGVSSKSGSADVLEALGVNIMLTPEQVAESIETAGIGFMFAPNHHPAMKNVAPIRKELGVRTIFNILGPLTNPAGAPNILMGVFHPDLVGIQVRVMQRLGAKHAVVVYGKDGMDEVSLGAATLVGELKDGVVTEYEIHPEDFGLQMVSNRSLKVADADESKAMLIEALENKPGTPREIVSLNAGAALYAANIAGSIGDGMKLAREAIASGAARAKLDELVRVTNQFKA</sequence>
<dbReference type="EC" id="2.4.2.18" evidence="1"/>
<dbReference type="EMBL" id="CP001068">
    <property type="protein sequence ID" value="ACD28249.1"/>
    <property type="molecule type" value="Genomic_DNA"/>
</dbReference>
<dbReference type="SMR" id="B2UDK8"/>
<dbReference type="STRING" id="402626.Rpic_3126"/>
<dbReference type="KEGG" id="rpi:Rpic_3126"/>
<dbReference type="PATRIC" id="fig|402626.5.peg.4265"/>
<dbReference type="eggNOG" id="COG0547">
    <property type="taxonomic scope" value="Bacteria"/>
</dbReference>
<dbReference type="HOGENOM" id="CLU_034315_2_1_4"/>
<dbReference type="UniPathway" id="UPA00035">
    <property type="reaction ID" value="UER00041"/>
</dbReference>
<dbReference type="GO" id="GO:0005829">
    <property type="term" value="C:cytosol"/>
    <property type="evidence" value="ECO:0007669"/>
    <property type="project" value="TreeGrafter"/>
</dbReference>
<dbReference type="GO" id="GO:0004048">
    <property type="term" value="F:anthranilate phosphoribosyltransferase activity"/>
    <property type="evidence" value="ECO:0007669"/>
    <property type="project" value="UniProtKB-UniRule"/>
</dbReference>
<dbReference type="GO" id="GO:0000287">
    <property type="term" value="F:magnesium ion binding"/>
    <property type="evidence" value="ECO:0007669"/>
    <property type="project" value="UniProtKB-UniRule"/>
</dbReference>
<dbReference type="GO" id="GO:0000162">
    <property type="term" value="P:L-tryptophan biosynthetic process"/>
    <property type="evidence" value="ECO:0007669"/>
    <property type="project" value="UniProtKB-UniRule"/>
</dbReference>
<dbReference type="FunFam" id="1.20.970.10:FF:000006">
    <property type="entry name" value="Anthranilate phosphoribosyltransferase"/>
    <property type="match status" value="1"/>
</dbReference>
<dbReference type="FunFam" id="3.40.1030.10:FF:000002">
    <property type="entry name" value="Anthranilate phosphoribosyltransferase"/>
    <property type="match status" value="1"/>
</dbReference>
<dbReference type="Gene3D" id="3.40.1030.10">
    <property type="entry name" value="Nucleoside phosphorylase/phosphoribosyltransferase catalytic domain"/>
    <property type="match status" value="1"/>
</dbReference>
<dbReference type="Gene3D" id="1.20.970.10">
    <property type="entry name" value="Transferase, Pyrimidine Nucleoside Phosphorylase, Chain C"/>
    <property type="match status" value="1"/>
</dbReference>
<dbReference type="HAMAP" id="MF_00211">
    <property type="entry name" value="TrpD"/>
    <property type="match status" value="1"/>
</dbReference>
<dbReference type="InterPro" id="IPR005940">
    <property type="entry name" value="Anthranilate_Pribosyl_Tfrase"/>
</dbReference>
<dbReference type="InterPro" id="IPR000312">
    <property type="entry name" value="Glycosyl_Trfase_fam3"/>
</dbReference>
<dbReference type="InterPro" id="IPR017459">
    <property type="entry name" value="Glycosyl_Trfase_fam3_N_dom"/>
</dbReference>
<dbReference type="InterPro" id="IPR036320">
    <property type="entry name" value="Glycosyl_Trfase_fam3_N_dom_sf"/>
</dbReference>
<dbReference type="InterPro" id="IPR035902">
    <property type="entry name" value="Nuc_phospho_transferase"/>
</dbReference>
<dbReference type="NCBIfam" id="TIGR01245">
    <property type="entry name" value="trpD"/>
    <property type="match status" value="1"/>
</dbReference>
<dbReference type="PANTHER" id="PTHR43285">
    <property type="entry name" value="ANTHRANILATE PHOSPHORIBOSYLTRANSFERASE"/>
    <property type="match status" value="1"/>
</dbReference>
<dbReference type="PANTHER" id="PTHR43285:SF2">
    <property type="entry name" value="ANTHRANILATE PHOSPHORIBOSYLTRANSFERASE"/>
    <property type="match status" value="1"/>
</dbReference>
<dbReference type="Pfam" id="PF02885">
    <property type="entry name" value="Glycos_trans_3N"/>
    <property type="match status" value="1"/>
</dbReference>
<dbReference type="Pfam" id="PF00591">
    <property type="entry name" value="Glycos_transf_3"/>
    <property type="match status" value="1"/>
</dbReference>
<dbReference type="SUPFAM" id="SSF52418">
    <property type="entry name" value="Nucleoside phosphorylase/phosphoribosyltransferase catalytic domain"/>
    <property type="match status" value="1"/>
</dbReference>
<dbReference type="SUPFAM" id="SSF47648">
    <property type="entry name" value="Nucleoside phosphorylase/phosphoribosyltransferase N-terminal domain"/>
    <property type="match status" value="1"/>
</dbReference>
<feature type="chain" id="PRO_1000099836" description="Anthranilate phosphoribosyltransferase">
    <location>
        <begin position="1"/>
        <end position="345"/>
    </location>
</feature>
<feature type="binding site" evidence="1">
    <location>
        <position position="86"/>
    </location>
    <ligand>
        <name>5-phospho-alpha-D-ribose 1-diphosphate</name>
        <dbReference type="ChEBI" id="CHEBI:58017"/>
    </ligand>
</feature>
<feature type="binding site" evidence="1">
    <location>
        <position position="86"/>
    </location>
    <ligand>
        <name>anthranilate</name>
        <dbReference type="ChEBI" id="CHEBI:16567"/>
        <label>1</label>
    </ligand>
</feature>
<feature type="binding site" evidence="1">
    <location>
        <begin position="89"/>
        <end position="90"/>
    </location>
    <ligand>
        <name>5-phospho-alpha-D-ribose 1-diphosphate</name>
        <dbReference type="ChEBI" id="CHEBI:58017"/>
    </ligand>
</feature>
<feature type="binding site" evidence="1">
    <location>
        <position position="94"/>
    </location>
    <ligand>
        <name>5-phospho-alpha-D-ribose 1-diphosphate</name>
        <dbReference type="ChEBI" id="CHEBI:58017"/>
    </ligand>
</feature>
<feature type="binding site" evidence="1">
    <location>
        <begin position="96"/>
        <end position="99"/>
    </location>
    <ligand>
        <name>5-phospho-alpha-D-ribose 1-diphosphate</name>
        <dbReference type="ChEBI" id="CHEBI:58017"/>
    </ligand>
</feature>
<feature type="binding site" evidence="1">
    <location>
        <position position="98"/>
    </location>
    <ligand>
        <name>Mg(2+)</name>
        <dbReference type="ChEBI" id="CHEBI:18420"/>
        <label>1</label>
    </ligand>
</feature>
<feature type="binding site" evidence="1">
    <location>
        <begin position="114"/>
        <end position="122"/>
    </location>
    <ligand>
        <name>5-phospho-alpha-D-ribose 1-diphosphate</name>
        <dbReference type="ChEBI" id="CHEBI:58017"/>
    </ligand>
</feature>
<feature type="binding site" evidence="1">
    <location>
        <position position="126"/>
    </location>
    <ligand>
        <name>5-phospho-alpha-D-ribose 1-diphosphate</name>
        <dbReference type="ChEBI" id="CHEBI:58017"/>
    </ligand>
</feature>
<feature type="binding site" evidence="1">
    <location>
        <position position="172"/>
    </location>
    <ligand>
        <name>anthranilate</name>
        <dbReference type="ChEBI" id="CHEBI:16567"/>
        <label>2</label>
    </ligand>
</feature>
<feature type="binding site" evidence="1">
    <location>
        <position position="231"/>
    </location>
    <ligand>
        <name>Mg(2+)</name>
        <dbReference type="ChEBI" id="CHEBI:18420"/>
        <label>2</label>
    </ligand>
</feature>
<feature type="binding site" evidence="1">
    <location>
        <position position="232"/>
    </location>
    <ligand>
        <name>Mg(2+)</name>
        <dbReference type="ChEBI" id="CHEBI:18420"/>
        <label>1</label>
    </ligand>
</feature>
<feature type="binding site" evidence="1">
    <location>
        <position position="232"/>
    </location>
    <ligand>
        <name>Mg(2+)</name>
        <dbReference type="ChEBI" id="CHEBI:18420"/>
        <label>2</label>
    </ligand>
</feature>
<reference key="1">
    <citation type="submission" date="2008-05" db="EMBL/GenBank/DDBJ databases">
        <title>Complete sequence of chromosome 1 of Ralstonia pickettii 12J.</title>
        <authorList>
            <person name="Lucas S."/>
            <person name="Copeland A."/>
            <person name="Lapidus A."/>
            <person name="Glavina del Rio T."/>
            <person name="Dalin E."/>
            <person name="Tice H."/>
            <person name="Bruce D."/>
            <person name="Goodwin L."/>
            <person name="Pitluck S."/>
            <person name="Meincke L."/>
            <person name="Brettin T."/>
            <person name="Detter J.C."/>
            <person name="Han C."/>
            <person name="Kuske C.R."/>
            <person name="Schmutz J."/>
            <person name="Larimer F."/>
            <person name="Land M."/>
            <person name="Hauser L."/>
            <person name="Kyrpides N."/>
            <person name="Mikhailova N."/>
            <person name="Marsh T."/>
            <person name="Richardson P."/>
        </authorList>
    </citation>
    <scope>NUCLEOTIDE SEQUENCE [LARGE SCALE GENOMIC DNA]</scope>
    <source>
        <strain>12J</strain>
    </source>
</reference>
<accession>B2UDK8</accession>
<evidence type="ECO:0000255" key="1">
    <source>
        <dbReference type="HAMAP-Rule" id="MF_00211"/>
    </source>
</evidence>
<gene>
    <name evidence="1" type="primary">trpD</name>
    <name type="ordered locus">Rpic_3126</name>
</gene>
<organism>
    <name type="scientific">Ralstonia pickettii (strain 12J)</name>
    <dbReference type="NCBI Taxonomy" id="402626"/>
    <lineage>
        <taxon>Bacteria</taxon>
        <taxon>Pseudomonadati</taxon>
        <taxon>Pseudomonadota</taxon>
        <taxon>Betaproteobacteria</taxon>
        <taxon>Burkholderiales</taxon>
        <taxon>Burkholderiaceae</taxon>
        <taxon>Ralstonia</taxon>
    </lineage>
</organism>